<feature type="chain" id="PRO_0000099711" description="Uncharacterized 7.1 kDa protein">
    <location>
        <begin position="1"/>
        <end position="67"/>
    </location>
</feature>
<dbReference type="EMBL" id="M35027">
    <property type="protein sequence ID" value="AAA48017.1"/>
    <property type="molecule type" value="Genomic_DNA"/>
</dbReference>
<dbReference type="PIR" id="I42505">
    <property type="entry name" value="I42505"/>
</dbReference>
<dbReference type="Proteomes" id="UP000008269">
    <property type="component" value="Segment"/>
</dbReference>
<proteinExistence type="predicted"/>
<accession>P20559</accession>
<protein>
    <recommendedName>
        <fullName>Uncharacterized 7.1 kDa protein</fullName>
    </recommendedName>
</protein>
<name>YVFA_VACCC</name>
<keyword id="KW-1185">Reference proteome</keyword>
<reference key="1">
    <citation type="journal article" date="1990" name="Virology">
        <title>The complete DNA sequence of vaccinia virus.</title>
        <authorList>
            <person name="Goebel S.J."/>
            <person name="Johnson G.P."/>
            <person name="Perkus M.E."/>
            <person name="Davis S.W."/>
            <person name="Winslow J.P."/>
            <person name="Paoletti E."/>
        </authorList>
    </citation>
    <scope>NUCLEOTIDE SEQUENCE [LARGE SCALE GENOMIC DNA]</scope>
</reference>
<reference key="2">
    <citation type="journal article" date="1990" name="Virology">
        <title>Appendix to 'The complete DNA sequence of vaccinia virus'.</title>
        <authorList>
            <person name="Goebel S.J."/>
            <person name="Johnson G.P."/>
            <person name="Perkus M.E."/>
            <person name="Davis S.W."/>
            <person name="Winslow J.P."/>
            <person name="Paoletti E."/>
        </authorList>
    </citation>
    <scope>COMPLETE GENOME</scope>
</reference>
<sequence>MDATAGLHLGFRRLGILTQAASPWNQRSTDVGFGRPPTTYNLLLAGIPVAYSLGLFIGGIGIQLFDI</sequence>
<gene>
    <name type="ORF">F ORF A</name>
</gene>
<organism>
    <name type="scientific">Vaccinia virus (strain Copenhagen)</name>
    <name type="common">VACV</name>
    <dbReference type="NCBI Taxonomy" id="10249"/>
    <lineage>
        <taxon>Viruses</taxon>
        <taxon>Varidnaviria</taxon>
        <taxon>Bamfordvirae</taxon>
        <taxon>Nucleocytoviricota</taxon>
        <taxon>Pokkesviricetes</taxon>
        <taxon>Chitovirales</taxon>
        <taxon>Poxviridae</taxon>
        <taxon>Chordopoxvirinae</taxon>
        <taxon>Orthopoxvirus</taxon>
        <taxon>Vaccinia virus</taxon>
    </lineage>
</organism>
<organismHost>
    <name type="scientific">Homo sapiens</name>
    <name type="common">Human</name>
    <dbReference type="NCBI Taxonomy" id="9606"/>
</organismHost>